<evidence type="ECO:0000255" key="1">
    <source>
        <dbReference type="HAMAP-Rule" id="MF_00300"/>
    </source>
</evidence>
<name>AROC_XANC8</name>
<gene>
    <name evidence="1" type="primary">aroC</name>
    <name type="ordered locus">XC_1567</name>
</gene>
<comment type="function">
    <text evidence="1">Catalyzes the anti-1,4-elimination of the C-3 phosphate and the C-6 proR hydrogen from 5-enolpyruvylshikimate-3-phosphate (EPSP) to yield chorismate, which is the branch point compound that serves as the starting substrate for the three terminal pathways of aromatic amino acid biosynthesis. This reaction introduces a second double bond into the aromatic ring system.</text>
</comment>
<comment type="catalytic activity">
    <reaction evidence="1">
        <text>5-O-(1-carboxyvinyl)-3-phosphoshikimate = chorismate + phosphate</text>
        <dbReference type="Rhea" id="RHEA:21020"/>
        <dbReference type="ChEBI" id="CHEBI:29748"/>
        <dbReference type="ChEBI" id="CHEBI:43474"/>
        <dbReference type="ChEBI" id="CHEBI:57701"/>
        <dbReference type="EC" id="4.2.3.5"/>
    </reaction>
</comment>
<comment type="cofactor">
    <cofactor evidence="1">
        <name>FMNH2</name>
        <dbReference type="ChEBI" id="CHEBI:57618"/>
    </cofactor>
    <text evidence="1">Reduced FMN (FMNH(2)).</text>
</comment>
<comment type="pathway">
    <text evidence="1">Metabolic intermediate biosynthesis; chorismate biosynthesis; chorismate from D-erythrose 4-phosphate and phosphoenolpyruvate: step 7/7.</text>
</comment>
<comment type="subunit">
    <text evidence="1">Homotetramer.</text>
</comment>
<comment type="similarity">
    <text evidence="1">Belongs to the chorismate synthase family.</text>
</comment>
<dbReference type="EC" id="4.2.3.5" evidence="1"/>
<dbReference type="EMBL" id="CP000050">
    <property type="protein sequence ID" value="AAY48633.1"/>
    <property type="molecule type" value="Genomic_DNA"/>
</dbReference>
<dbReference type="RefSeq" id="WP_011037681.1">
    <property type="nucleotide sequence ID" value="NZ_CP155948.1"/>
</dbReference>
<dbReference type="SMR" id="Q4UWE0"/>
<dbReference type="KEGG" id="xcb:XC_1567"/>
<dbReference type="HOGENOM" id="CLU_034547_0_2_6"/>
<dbReference type="UniPathway" id="UPA00053">
    <property type="reaction ID" value="UER00090"/>
</dbReference>
<dbReference type="Proteomes" id="UP000000420">
    <property type="component" value="Chromosome"/>
</dbReference>
<dbReference type="GO" id="GO:0005829">
    <property type="term" value="C:cytosol"/>
    <property type="evidence" value="ECO:0007669"/>
    <property type="project" value="TreeGrafter"/>
</dbReference>
<dbReference type="GO" id="GO:0004107">
    <property type="term" value="F:chorismate synthase activity"/>
    <property type="evidence" value="ECO:0007669"/>
    <property type="project" value="UniProtKB-UniRule"/>
</dbReference>
<dbReference type="GO" id="GO:0010181">
    <property type="term" value="F:FMN binding"/>
    <property type="evidence" value="ECO:0007669"/>
    <property type="project" value="TreeGrafter"/>
</dbReference>
<dbReference type="GO" id="GO:0008652">
    <property type="term" value="P:amino acid biosynthetic process"/>
    <property type="evidence" value="ECO:0007669"/>
    <property type="project" value="UniProtKB-KW"/>
</dbReference>
<dbReference type="GO" id="GO:0009073">
    <property type="term" value="P:aromatic amino acid family biosynthetic process"/>
    <property type="evidence" value="ECO:0007669"/>
    <property type="project" value="UniProtKB-KW"/>
</dbReference>
<dbReference type="GO" id="GO:0009423">
    <property type="term" value="P:chorismate biosynthetic process"/>
    <property type="evidence" value="ECO:0007669"/>
    <property type="project" value="UniProtKB-UniRule"/>
</dbReference>
<dbReference type="CDD" id="cd07304">
    <property type="entry name" value="Chorismate_synthase"/>
    <property type="match status" value="1"/>
</dbReference>
<dbReference type="FunFam" id="3.60.150.10:FF:000001">
    <property type="entry name" value="Chorismate synthase"/>
    <property type="match status" value="1"/>
</dbReference>
<dbReference type="Gene3D" id="3.60.150.10">
    <property type="entry name" value="Chorismate synthase AroC"/>
    <property type="match status" value="1"/>
</dbReference>
<dbReference type="HAMAP" id="MF_00300">
    <property type="entry name" value="Chorismate_synth"/>
    <property type="match status" value="1"/>
</dbReference>
<dbReference type="InterPro" id="IPR000453">
    <property type="entry name" value="Chorismate_synth"/>
</dbReference>
<dbReference type="InterPro" id="IPR035904">
    <property type="entry name" value="Chorismate_synth_AroC_sf"/>
</dbReference>
<dbReference type="InterPro" id="IPR020541">
    <property type="entry name" value="Chorismate_synthase_CS"/>
</dbReference>
<dbReference type="NCBIfam" id="TIGR00033">
    <property type="entry name" value="aroC"/>
    <property type="match status" value="1"/>
</dbReference>
<dbReference type="NCBIfam" id="NF003793">
    <property type="entry name" value="PRK05382.1"/>
    <property type="match status" value="1"/>
</dbReference>
<dbReference type="PANTHER" id="PTHR21085">
    <property type="entry name" value="CHORISMATE SYNTHASE"/>
    <property type="match status" value="1"/>
</dbReference>
<dbReference type="PANTHER" id="PTHR21085:SF0">
    <property type="entry name" value="CHORISMATE SYNTHASE"/>
    <property type="match status" value="1"/>
</dbReference>
<dbReference type="Pfam" id="PF01264">
    <property type="entry name" value="Chorismate_synt"/>
    <property type="match status" value="1"/>
</dbReference>
<dbReference type="PIRSF" id="PIRSF001456">
    <property type="entry name" value="Chorismate_synth"/>
    <property type="match status" value="1"/>
</dbReference>
<dbReference type="SUPFAM" id="SSF103263">
    <property type="entry name" value="Chorismate synthase, AroC"/>
    <property type="match status" value="1"/>
</dbReference>
<dbReference type="PROSITE" id="PS00787">
    <property type="entry name" value="CHORISMATE_SYNTHASE_1"/>
    <property type="match status" value="1"/>
</dbReference>
<dbReference type="PROSITE" id="PS00788">
    <property type="entry name" value="CHORISMATE_SYNTHASE_2"/>
    <property type="match status" value="1"/>
</dbReference>
<dbReference type="PROSITE" id="PS00789">
    <property type="entry name" value="CHORISMATE_SYNTHASE_3"/>
    <property type="match status" value="1"/>
</dbReference>
<accession>Q4UWE0</accession>
<protein>
    <recommendedName>
        <fullName evidence="1">Chorismate synthase</fullName>
        <shortName evidence="1">CS</shortName>
        <ecNumber evidence="1">4.2.3.5</ecNumber>
    </recommendedName>
    <alternativeName>
        <fullName evidence="1">5-enolpyruvylshikimate-3-phosphate phospholyase</fullName>
    </alternativeName>
</protein>
<organism>
    <name type="scientific">Xanthomonas campestris pv. campestris (strain 8004)</name>
    <dbReference type="NCBI Taxonomy" id="314565"/>
    <lineage>
        <taxon>Bacteria</taxon>
        <taxon>Pseudomonadati</taxon>
        <taxon>Pseudomonadota</taxon>
        <taxon>Gammaproteobacteria</taxon>
        <taxon>Lysobacterales</taxon>
        <taxon>Lysobacteraceae</taxon>
        <taxon>Xanthomonas</taxon>
    </lineage>
</organism>
<reference key="1">
    <citation type="journal article" date="2005" name="Genome Res.">
        <title>Comparative and functional genomic analyses of the pathogenicity of phytopathogen Xanthomonas campestris pv. campestris.</title>
        <authorList>
            <person name="Qian W."/>
            <person name="Jia Y."/>
            <person name="Ren S.-X."/>
            <person name="He Y.-Q."/>
            <person name="Feng J.-X."/>
            <person name="Lu L.-F."/>
            <person name="Sun Q."/>
            <person name="Ying G."/>
            <person name="Tang D.-J."/>
            <person name="Tang H."/>
            <person name="Wu W."/>
            <person name="Hao P."/>
            <person name="Wang L."/>
            <person name="Jiang B.-L."/>
            <person name="Zeng S."/>
            <person name="Gu W.-Y."/>
            <person name="Lu G."/>
            <person name="Rong L."/>
            <person name="Tian Y."/>
            <person name="Yao Z."/>
            <person name="Fu G."/>
            <person name="Chen B."/>
            <person name="Fang R."/>
            <person name="Qiang B."/>
            <person name="Chen Z."/>
            <person name="Zhao G.-P."/>
            <person name="Tang J.-L."/>
            <person name="He C."/>
        </authorList>
    </citation>
    <scope>NUCLEOTIDE SEQUENCE [LARGE SCALE GENOMIC DNA]</scope>
    <source>
        <strain>8004</strain>
    </source>
</reference>
<feature type="chain" id="PRO_0000256361" description="Chorismate synthase">
    <location>
        <begin position="1"/>
        <end position="367"/>
    </location>
</feature>
<feature type="binding site" evidence="1">
    <location>
        <position position="48"/>
    </location>
    <ligand>
        <name>NADP(+)</name>
        <dbReference type="ChEBI" id="CHEBI:58349"/>
    </ligand>
</feature>
<feature type="binding site" evidence="1">
    <location>
        <position position="54"/>
    </location>
    <ligand>
        <name>NADP(+)</name>
        <dbReference type="ChEBI" id="CHEBI:58349"/>
    </ligand>
</feature>
<feature type="binding site" evidence="1">
    <location>
        <begin position="125"/>
        <end position="127"/>
    </location>
    <ligand>
        <name>FMN</name>
        <dbReference type="ChEBI" id="CHEBI:58210"/>
    </ligand>
</feature>
<feature type="binding site" evidence="1">
    <location>
        <begin position="238"/>
        <end position="239"/>
    </location>
    <ligand>
        <name>FMN</name>
        <dbReference type="ChEBI" id="CHEBI:58210"/>
    </ligand>
</feature>
<feature type="binding site" evidence="1">
    <location>
        <position position="278"/>
    </location>
    <ligand>
        <name>FMN</name>
        <dbReference type="ChEBI" id="CHEBI:58210"/>
    </ligand>
</feature>
<feature type="binding site" evidence="1">
    <location>
        <begin position="293"/>
        <end position="297"/>
    </location>
    <ligand>
        <name>FMN</name>
        <dbReference type="ChEBI" id="CHEBI:58210"/>
    </ligand>
</feature>
<feature type="binding site" evidence="1">
    <location>
        <position position="319"/>
    </location>
    <ligand>
        <name>FMN</name>
        <dbReference type="ChEBI" id="CHEBI:58210"/>
    </ligand>
</feature>
<proteinExistence type="inferred from homology"/>
<keyword id="KW-0028">Amino-acid biosynthesis</keyword>
<keyword id="KW-0057">Aromatic amino acid biosynthesis</keyword>
<keyword id="KW-0274">FAD</keyword>
<keyword id="KW-0285">Flavoprotein</keyword>
<keyword id="KW-0288">FMN</keyword>
<keyword id="KW-0456">Lyase</keyword>
<keyword id="KW-0521">NADP</keyword>
<sequence length="367" mass="39138">MGSNSFGRLFTVTTFGESHGPAIGCVIDGCPPGLEIAPEEFTHDLQRRATGKSRHTSARREADEIEILSGVYEGRTTGTPIGLLIRNTDQRSKDYTNIAQQFRPGHADYTYWQKYGIRDPRGGGRSSARETTMRVAAGVIAKKWLKQRYGVLVRGFLSQLGEIRPSGFDWDAVEDNPFFWPHAAQVPELETYMDALRKSGDSVGARVDVVAGGVPPGWGEPIYGKLDSELAAALMSINAVKGVEIGDGFASAAQKGTEHRDLITPEGFLSNHAGGILGGISTGQAVTASMVLKPTSSLRLPGATVDADGAVVDVITTGRHDPCVGIRATPIAEAMMALVLMDQALRHRAQCGDVGEVSPLIPGQADV</sequence>